<sequence length="722" mass="80181">MTELKPLLIELGTEELPVNALPSLSRAFFEGVLAGLERRGIVIDHGEAKSLSTPRRLAVLLTAVAVEQPKQYRELFGPYLNTAFDTEGKPTKALEGFAAKCGVNWRTLERIRDTKGERFVHRVVVPGERTDALLPGILTEAIAGMPIPKPMRWGAHEYLFARPVHWLVMLFGQDVVEAEIMGVKAGRISRGHRFLYDKPVSLSDPQNYIDVLQAAYVLVDPAARRARIVAEIEAVARQVGGVARITEDNVAQVVNLVEWPSAVLCSFERVFLEVPQEALIQTMEVNQKFFPVLDSLGKLTEKFIGIANIESNDVAEVAKGYERVIRPRFSDAKFFFNEDLKQGLKAMGERLRTVTYHAKLGTLADKVARVLVLAEAIAPQIGVDPLLARRVALLSKNDLQSRMVNEFPELQGVAGHHYALISGELPEVAMAIEDAYRPRFSGDEIARSPLGKVLGLAERLDTLACGFAVGMKPTGNKDPFGLRRNALGLARTIIESRFDLDLKVLLDQASDWVAFATTIEQERHAQESVKQSKKEAAVKHSLPQVSDEKSARIEELYDFIVERLRGYYADKGIPTTHFNAVAELKPVSLYDFHRRLDAIGRFAALPEAEALAVANKRIRNILRKAEIKIPASVDATLFDQPAESGLLVALEGVITDTRSALDCKNYVSVLTCLARLRPPIDEFFDKVMVNDENLMLRANRLALLQRLGEYLCCVAAIEHLSN</sequence>
<feature type="chain" id="PRO_1000101373" description="Glycine--tRNA ligase beta subunit">
    <location>
        <begin position="1"/>
        <end position="722"/>
    </location>
</feature>
<gene>
    <name evidence="1" type="primary">glyS</name>
    <name type="ordered locus">Xfasm12_1013</name>
</gene>
<accession>B0U7B2</accession>
<proteinExistence type="inferred from homology"/>
<comment type="catalytic activity">
    <reaction evidence="1">
        <text>tRNA(Gly) + glycine + ATP = glycyl-tRNA(Gly) + AMP + diphosphate</text>
        <dbReference type="Rhea" id="RHEA:16013"/>
        <dbReference type="Rhea" id="RHEA-COMP:9664"/>
        <dbReference type="Rhea" id="RHEA-COMP:9683"/>
        <dbReference type="ChEBI" id="CHEBI:30616"/>
        <dbReference type="ChEBI" id="CHEBI:33019"/>
        <dbReference type="ChEBI" id="CHEBI:57305"/>
        <dbReference type="ChEBI" id="CHEBI:78442"/>
        <dbReference type="ChEBI" id="CHEBI:78522"/>
        <dbReference type="ChEBI" id="CHEBI:456215"/>
        <dbReference type="EC" id="6.1.1.14"/>
    </reaction>
</comment>
<comment type="subunit">
    <text evidence="1">Tetramer of two alpha and two beta subunits.</text>
</comment>
<comment type="subcellular location">
    <subcellularLocation>
        <location evidence="1">Cytoplasm</location>
    </subcellularLocation>
</comment>
<comment type="similarity">
    <text evidence="1">Belongs to the class-II aminoacyl-tRNA synthetase family.</text>
</comment>
<organism>
    <name type="scientific">Xylella fastidiosa (strain M12)</name>
    <dbReference type="NCBI Taxonomy" id="405440"/>
    <lineage>
        <taxon>Bacteria</taxon>
        <taxon>Pseudomonadati</taxon>
        <taxon>Pseudomonadota</taxon>
        <taxon>Gammaproteobacteria</taxon>
        <taxon>Lysobacterales</taxon>
        <taxon>Lysobacteraceae</taxon>
        <taxon>Xylella</taxon>
    </lineage>
</organism>
<name>SYGB_XYLFM</name>
<reference key="1">
    <citation type="journal article" date="2010" name="J. Bacteriol.">
        <title>Whole genome sequences of two Xylella fastidiosa strains (M12 and M23) causing almond leaf scorch disease in California.</title>
        <authorList>
            <person name="Chen J."/>
            <person name="Xie G."/>
            <person name="Han S."/>
            <person name="Chertkov O."/>
            <person name="Sims D."/>
            <person name="Civerolo E.L."/>
        </authorList>
    </citation>
    <scope>NUCLEOTIDE SEQUENCE [LARGE SCALE GENOMIC DNA]</scope>
    <source>
        <strain>M12</strain>
    </source>
</reference>
<protein>
    <recommendedName>
        <fullName evidence="1">Glycine--tRNA ligase beta subunit</fullName>
        <ecNumber evidence="1">6.1.1.14</ecNumber>
    </recommendedName>
    <alternativeName>
        <fullName evidence="1">Glycyl-tRNA synthetase beta subunit</fullName>
        <shortName evidence="1">GlyRS</shortName>
    </alternativeName>
</protein>
<keyword id="KW-0030">Aminoacyl-tRNA synthetase</keyword>
<keyword id="KW-0067">ATP-binding</keyword>
<keyword id="KW-0963">Cytoplasm</keyword>
<keyword id="KW-0436">Ligase</keyword>
<keyword id="KW-0547">Nucleotide-binding</keyword>
<keyword id="KW-0648">Protein biosynthesis</keyword>
<dbReference type="EC" id="6.1.1.14" evidence="1"/>
<dbReference type="EMBL" id="CP000941">
    <property type="protein sequence ID" value="ACA11978.1"/>
    <property type="molecule type" value="Genomic_DNA"/>
</dbReference>
<dbReference type="RefSeq" id="WP_004085462.1">
    <property type="nucleotide sequence ID" value="NC_010513.1"/>
</dbReference>
<dbReference type="SMR" id="B0U7B2"/>
<dbReference type="KEGG" id="xfm:Xfasm12_1013"/>
<dbReference type="HOGENOM" id="CLU_007220_2_2_6"/>
<dbReference type="GO" id="GO:0005829">
    <property type="term" value="C:cytosol"/>
    <property type="evidence" value="ECO:0007669"/>
    <property type="project" value="TreeGrafter"/>
</dbReference>
<dbReference type="GO" id="GO:0004814">
    <property type="term" value="F:arginine-tRNA ligase activity"/>
    <property type="evidence" value="ECO:0007669"/>
    <property type="project" value="InterPro"/>
</dbReference>
<dbReference type="GO" id="GO:0005524">
    <property type="term" value="F:ATP binding"/>
    <property type="evidence" value="ECO:0007669"/>
    <property type="project" value="UniProtKB-UniRule"/>
</dbReference>
<dbReference type="GO" id="GO:0004820">
    <property type="term" value="F:glycine-tRNA ligase activity"/>
    <property type="evidence" value="ECO:0007669"/>
    <property type="project" value="UniProtKB-UniRule"/>
</dbReference>
<dbReference type="GO" id="GO:0006420">
    <property type="term" value="P:arginyl-tRNA aminoacylation"/>
    <property type="evidence" value="ECO:0007669"/>
    <property type="project" value="InterPro"/>
</dbReference>
<dbReference type="GO" id="GO:0006426">
    <property type="term" value="P:glycyl-tRNA aminoacylation"/>
    <property type="evidence" value="ECO:0007669"/>
    <property type="project" value="UniProtKB-UniRule"/>
</dbReference>
<dbReference type="HAMAP" id="MF_00255">
    <property type="entry name" value="Gly_tRNA_synth_beta"/>
    <property type="match status" value="1"/>
</dbReference>
<dbReference type="InterPro" id="IPR008909">
    <property type="entry name" value="DALR_anticod-bd"/>
</dbReference>
<dbReference type="InterPro" id="IPR015944">
    <property type="entry name" value="Gly-tRNA-synth_bsu"/>
</dbReference>
<dbReference type="InterPro" id="IPR006194">
    <property type="entry name" value="Gly-tRNA-synth_heterodimer"/>
</dbReference>
<dbReference type="NCBIfam" id="TIGR00211">
    <property type="entry name" value="glyS"/>
    <property type="match status" value="1"/>
</dbReference>
<dbReference type="PANTHER" id="PTHR30075:SF2">
    <property type="entry name" value="GLYCINE--TRNA LIGASE, CHLOROPLASTIC_MITOCHONDRIAL 2"/>
    <property type="match status" value="1"/>
</dbReference>
<dbReference type="PANTHER" id="PTHR30075">
    <property type="entry name" value="GLYCYL-TRNA SYNTHETASE"/>
    <property type="match status" value="1"/>
</dbReference>
<dbReference type="Pfam" id="PF05746">
    <property type="entry name" value="DALR_1"/>
    <property type="match status" value="1"/>
</dbReference>
<dbReference type="Pfam" id="PF02092">
    <property type="entry name" value="tRNA_synt_2f"/>
    <property type="match status" value="1"/>
</dbReference>
<dbReference type="PRINTS" id="PR01045">
    <property type="entry name" value="TRNASYNTHGB"/>
</dbReference>
<dbReference type="SUPFAM" id="SSF109604">
    <property type="entry name" value="HD-domain/PDEase-like"/>
    <property type="match status" value="1"/>
</dbReference>
<dbReference type="PROSITE" id="PS50861">
    <property type="entry name" value="AA_TRNA_LIGASE_II_GLYAB"/>
    <property type="match status" value="1"/>
</dbReference>
<evidence type="ECO:0000255" key="1">
    <source>
        <dbReference type="HAMAP-Rule" id="MF_00255"/>
    </source>
</evidence>